<comment type="catalytic activity">
    <reaction evidence="1">
        <text>tRNA(His) + L-histidine + ATP = L-histidyl-tRNA(His) + AMP + diphosphate + H(+)</text>
        <dbReference type="Rhea" id="RHEA:17313"/>
        <dbReference type="Rhea" id="RHEA-COMP:9665"/>
        <dbReference type="Rhea" id="RHEA-COMP:9689"/>
        <dbReference type="ChEBI" id="CHEBI:15378"/>
        <dbReference type="ChEBI" id="CHEBI:30616"/>
        <dbReference type="ChEBI" id="CHEBI:33019"/>
        <dbReference type="ChEBI" id="CHEBI:57595"/>
        <dbReference type="ChEBI" id="CHEBI:78442"/>
        <dbReference type="ChEBI" id="CHEBI:78527"/>
        <dbReference type="ChEBI" id="CHEBI:456215"/>
        <dbReference type="EC" id="6.1.1.21"/>
    </reaction>
</comment>
<comment type="subunit">
    <text evidence="1">Homodimer.</text>
</comment>
<comment type="subcellular location">
    <subcellularLocation>
        <location evidence="1">Cytoplasm</location>
    </subcellularLocation>
</comment>
<comment type="similarity">
    <text evidence="1">Belongs to the class-II aminoacyl-tRNA synthetase family.</text>
</comment>
<keyword id="KW-0030">Aminoacyl-tRNA synthetase</keyword>
<keyword id="KW-0067">ATP-binding</keyword>
<keyword id="KW-0963">Cytoplasm</keyword>
<keyword id="KW-0436">Ligase</keyword>
<keyword id="KW-0547">Nucleotide-binding</keyword>
<keyword id="KW-0648">Protein biosynthesis</keyword>
<feature type="chain" id="PRO_1000071407" description="Histidine--tRNA ligase">
    <location>
        <begin position="1"/>
        <end position="420"/>
    </location>
</feature>
<protein>
    <recommendedName>
        <fullName evidence="1">Histidine--tRNA ligase</fullName>
        <ecNumber evidence="1">6.1.1.21</ecNumber>
    </recommendedName>
    <alternativeName>
        <fullName evidence="1">Histidyl-tRNA synthetase</fullName>
        <shortName evidence="1">HisRS</shortName>
    </alternativeName>
</protein>
<name>SYH_STAAE</name>
<gene>
    <name evidence="1" type="primary">hisS</name>
    <name type="ordered locus">NWMN_1533</name>
</gene>
<accession>A6QHH3</accession>
<proteinExistence type="inferred from homology"/>
<organism>
    <name type="scientific">Staphylococcus aureus (strain Newman)</name>
    <dbReference type="NCBI Taxonomy" id="426430"/>
    <lineage>
        <taxon>Bacteria</taxon>
        <taxon>Bacillati</taxon>
        <taxon>Bacillota</taxon>
        <taxon>Bacilli</taxon>
        <taxon>Bacillales</taxon>
        <taxon>Staphylococcaceae</taxon>
        <taxon>Staphylococcus</taxon>
    </lineage>
</organism>
<reference key="1">
    <citation type="journal article" date="2008" name="J. Bacteriol.">
        <title>Genome sequence of Staphylococcus aureus strain Newman and comparative analysis of staphylococcal genomes: polymorphism and evolution of two major pathogenicity islands.</title>
        <authorList>
            <person name="Baba T."/>
            <person name="Bae T."/>
            <person name="Schneewind O."/>
            <person name="Takeuchi F."/>
            <person name="Hiramatsu K."/>
        </authorList>
    </citation>
    <scope>NUCLEOTIDE SEQUENCE [LARGE SCALE GENOMIC DNA]</scope>
    <source>
        <strain>Newman</strain>
    </source>
</reference>
<evidence type="ECO:0000255" key="1">
    <source>
        <dbReference type="HAMAP-Rule" id="MF_00127"/>
    </source>
</evidence>
<sequence>MIKIPRGTQDILPEDSKKWRYIENQLDELMTFYNYKEIRTPIFESTDLFARGVGDSTDVVQKEMYTFKDKGDRSITLRPEGTAAVVRSYIEHKMQGNPNQPIKLYYNGPMFRYERKQKGRYRQFNQFGVEAIGAENPSVDAEVLAMVMHIYQSFGLKHLKLVINSVGDMASRKEYNEALVKHFEPVIHEFCSDCQSRLHTNPMRILDCKVDRDKEAIKTAPRITDFLNEESKAYYEQVKAYLDDLGIPYIEDPNLVRGLDYYTHTAFELMMDNPNYDGAITTLCGGGRYNGLLELLDGPSETGIGFALSIERLLLALEEEGIELDIEENLDLFIVTMGDQADRYAVKLLNHLRHNGIKADKDYLQRKIKGQMKQADRLGAKFTIVIGDQELENNKIDVKNMTTGESETIELDALVEYFKK</sequence>
<dbReference type="EC" id="6.1.1.21" evidence="1"/>
<dbReference type="EMBL" id="AP009351">
    <property type="protein sequence ID" value="BAF67805.1"/>
    <property type="molecule type" value="Genomic_DNA"/>
</dbReference>
<dbReference type="RefSeq" id="WP_000590826.1">
    <property type="nucleotide sequence ID" value="NZ_JBBIAE010000001.1"/>
</dbReference>
<dbReference type="SMR" id="A6QHH3"/>
<dbReference type="KEGG" id="sae:NWMN_1533"/>
<dbReference type="HOGENOM" id="CLU_025113_1_1_9"/>
<dbReference type="Proteomes" id="UP000006386">
    <property type="component" value="Chromosome"/>
</dbReference>
<dbReference type="GO" id="GO:0005737">
    <property type="term" value="C:cytoplasm"/>
    <property type="evidence" value="ECO:0007669"/>
    <property type="project" value="UniProtKB-SubCell"/>
</dbReference>
<dbReference type="GO" id="GO:0005524">
    <property type="term" value="F:ATP binding"/>
    <property type="evidence" value="ECO:0007669"/>
    <property type="project" value="UniProtKB-UniRule"/>
</dbReference>
<dbReference type="GO" id="GO:0140096">
    <property type="term" value="F:catalytic activity, acting on a protein"/>
    <property type="evidence" value="ECO:0007669"/>
    <property type="project" value="UniProtKB-ARBA"/>
</dbReference>
<dbReference type="GO" id="GO:0004821">
    <property type="term" value="F:histidine-tRNA ligase activity"/>
    <property type="evidence" value="ECO:0007669"/>
    <property type="project" value="UniProtKB-UniRule"/>
</dbReference>
<dbReference type="GO" id="GO:0016740">
    <property type="term" value="F:transferase activity"/>
    <property type="evidence" value="ECO:0007669"/>
    <property type="project" value="UniProtKB-ARBA"/>
</dbReference>
<dbReference type="GO" id="GO:0006427">
    <property type="term" value="P:histidyl-tRNA aminoacylation"/>
    <property type="evidence" value="ECO:0007669"/>
    <property type="project" value="UniProtKB-UniRule"/>
</dbReference>
<dbReference type="CDD" id="cd00738">
    <property type="entry name" value="HGTP_anticodon"/>
    <property type="match status" value="1"/>
</dbReference>
<dbReference type="CDD" id="cd00773">
    <property type="entry name" value="HisRS-like_core"/>
    <property type="match status" value="1"/>
</dbReference>
<dbReference type="FunFam" id="3.30.930.10:FF:000005">
    <property type="entry name" value="Histidine--tRNA ligase"/>
    <property type="match status" value="1"/>
</dbReference>
<dbReference type="Gene3D" id="3.40.50.800">
    <property type="entry name" value="Anticodon-binding domain"/>
    <property type="match status" value="1"/>
</dbReference>
<dbReference type="Gene3D" id="3.30.930.10">
    <property type="entry name" value="Bira Bifunctional Protein, Domain 2"/>
    <property type="match status" value="1"/>
</dbReference>
<dbReference type="HAMAP" id="MF_00127">
    <property type="entry name" value="His_tRNA_synth"/>
    <property type="match status" value="1"/>
</dbReference>
<dbReference type="InterPro" id="IPR006195">
    <property type="entry name" value="aa-tRNA-synth_II"/>
</dbReference>
<dbReference type="InterPro" id="IPR045864">
    <property type="entry name" value="aa-tRNA-synth_II/BPL/LPL"/>
</dbReference>
<dbReference type="InterPro" id="IPR004154">
    <property type="entry name" value="Anticodon-bd"/>
</dbReference>
<dbReference type="InterPro" id="IPR036621">
    <property type="entry name" value="Anticodon-bd_dom_sf"/>
</dbReference>
<dbReference type="InterPro" id="IPR015807">
    <property type="entry name" value="His-tRNA-ligase"/>
</dbReference>
<dbReference type="InterPro" id="IPR041715">
    <property type="entry name" value="HisRS-like_core"/>
</dbReference>
<dbReference type="InterPro" id="IPR004516">
    <property type="entry name" value="HisRS/HisZ"/>
</dbReference>
<dbReference type="NCBIfam" id="TIGR00442">
    <property type="entry name" value="hisS"/>
    <property type="match status" value="1"/>
</dbReference>
<dbReference type="PANTHER" id="PTHR43707:SF1">
    <property type="entry name" value="HISTIDINE--TRNA LIGASE, MITOCHONDRIAL-RELATED"/>
    <property type="match status" value="1"/>
</dbReference>
<dbReference type="PANTHER" id="PTHR43707">
    <property type="entry name" value="HISTIDYL-TRNA SYNTHETASE"/>
    <property type="match status" value="1"/>
</dbReference>
<dbReference type="Pfam" id="PF03129">
    <property type="entry name" value="HGTP_anticodon"/>
    <property type="match status" value="1"/>
</dbReference>
<dbReference type="Pfam" id="PF13393">
    <property type="entry name" value="tRNA-synt_His"/>
    <property type="match status" value="1"/>
</dbReference>
<dbReference type="PIRSF" id="PIRSF001549">
    <property type="entry name" value="His-tRNA_synth"/>
    <property type="match status" value="1"/>
</dbReference>
<dbReference type="SUPFAM" id="SSF52954">
    <property type="entry name" value="Class II aaRS ABD-related"/>
    <property type="match status" value="1"/>
</dbReference>
<dbReference type="SUPFAM" id="SSF55681">
    <property type="entry name" value="Class II aaRS and biotin synthetases"/>
    <property type="match status" value="1"/>
</dbReference>
<dbReference type="PROSITE" id="PS50862">
    <property type="entry name" value="AA_TRNA_LIGASE_II"/>
    <property type="match status" value="1"/>
</dbReference>